<comment type="similarity">
    <text evidence="1">Belongs to the bacterial ribosomal protein bL32 family.</text>
</comment>
<name>RL32_BLOFL</name>
<keyword id="KW-1185">Reference proteome</keyword>
<keyword id="KW-0687">Ribonucleoprotein</keyword>
<keyword id="KW-0689">Ribosomal protein</keyword>
<gene>
    <name evidence="1" type="primary">rpmF</name>
    <name type="ordered locus">Bfl408</name>
</gene>
<evidence type="ECO:0000255" key="1">
    <source>
        <dbReference type="HAMAP-Rule" id="MF_00340"/>
    </source>
</evidence>
<evidence type="ECO:0000256" key="2">
    <source>
        <dbReference type="SAM" id="MobiDB-lite"/>
    </source>
</evidence>
<evidence type="ECO:0000305" key="3"/>
<reference key="1">
    <citation type="journal article" date="2003" name="Proc. Natl. Acad. Sci. U.S.A.">
        <title>The genome sequence of Blochmannia floridanus: comparative analysis of reduced genomes.</title>
        <authorList>
            <person name="Gil R."/>
            <person name="Silva F.J."/>
            <person name="Zientz E."/>
            <person name="Delmotte F."/>
            <person name="Gonzalez-Candelas F."/>
            <person name="Latorre A."/>
            <person name="Rausell C."/>
            <person name="Kamerbeek J."/>
            <person name="Gadau J."/>
            <person name="Hoelldobler B."/>
            <person name="van Ham R.C.H.J."/>
            <person name="Gross R."/>
            <person name="Moya A."/>
        </authorList>
    </citation>
    <scope>NUCLEOTIDE SEQUENCE [LARGE SCALE GENOMIC DNA]</scope>
</reference>
<accession>Q7VR16</accession>
<dbReference type="EMBL" id="BX248583">
    <property type="protein sequence ID" value="CAD83474.1"/>
    <property type="molecule type" value="Genomic_DNA"/>
</dbReference>
<dbReference type="SMR" id="Q7VR16"/>
<dbReference type="STRING" id="203907.Bfl408"/>
<dbReference type="KEGG" id="bfl:Bfl408"/>
<dbReference type="eggNOG" id="COG0333">
    <property type="taxonomic scope" value="Bacteria"/>
</dbReference>
<dbReference type="HOGENOM" id="CLU_129084_2_1_6"/>
<dbReference type="OrthoDB" id="9801927at2"/>
<dbReference type="Proteomes" id="UP000002192">
    <property type="component" value="Chromosome"/>
</dbReference>
<dbReference type="GO" id="GO:0015934">
    <property type="term" value="C:large ribosomal subunit"/>
    <property type="evidence" value="ECO:0007669"/>
    <property type="project" value="InterPro"/>
</dbReference>
<dbReference type="GO" id="GO:0003735">
    <property type="term" value="F:structural constituent of ribosome"/>
    <property type="evidence" value="ECO:0007669"/>
    <property type="project" value="InterPro"/>
</dbReference>
<dbReference type="GO" id="GO:0006412">
    <property type="term" value="P:translation"/>
    <property type="evidence" value="ECO:0007669"/>
    <property type="project" value="UniProtKB-UniRule"/>
</dbReference>
<dbReference type="HAMAP" id="MF_00340">
    <property type="entry name" value="Ribosomal_bL32"/>
    <property type="match status" value="1"/>
</dbReference>
<dbReference type="InterPro" id="IPR002677">
    <property type="entry name" value="Ribosomal_bL32"/>
</dbReference>
<dbReference type="InterPro" id="IPR044957">
    <property type="entry name" value="Ribosomal_bL32_bact"/>
</dbReference>
<dbReference type="InterPro" id="IPR011332">
    <property type="entry name" value="Ribosomal_zn-bd"/>
</dbReference>
<dbReference type="NCBIfam" id="TIGR01031">
    <property type="entry name" value="rpmF_bact"/>
    <property type="match status" value="1"/>
</dbReference>
<dbReference type="PANTHER" id="PTHR35534">
    <property type="entry name" value="50S RIBOSOMAL PROTEIN L32"/>
    <property type="match status" value="1"/>
</dbReference>
<dbReference type="PANTHER" id="PTHR35534:SF1">
    <property type="entry name" value="LARGE RIBOSOMAL SUBUNIT PROTEIN BL32"/>
    <property type="match status" value="1"/>
</dbReference>
<dbReference type="Pfam" id="PF01783">
    <property type="entry name" value="Ribosomal_L32p"/>
    <property type="match status" value="1"/>
</dbReference>
<dbReference type="SUPFAM" id="SSF57829">
    <property type="entry name" value="Zn-binding ribosomal proteins"/>
    <property type="match status" value="1"/>
</dbReference>
<protein>
    <recommendedName>
        <fullName evidence="1">Large ribosomal subunit protein bL32</fullName>
    </recommendedName>
    <alternativeName>
        <fullName evidence="3">50S ribosomal protein L32</fullName>
    </alternativeName>
</protein>
<organism>
    <name type="scientific">Blochmanniella floridana</name>
    <dbReference type="NCBI Taxonomy" id="203907"/>
    <lineage>
        <taxon>Bacteria</taxon>
        <taxon>Pseudomonadati</taxon>
        <taxon>Pseudomonadota</taxon>
        <taxon>Gammaproteobacteria</taxon>
        <taxon>Enterobacterales</taxon>
        <taxon>Enterobacteriaceae</taxon>
        <taxon>ant endosymbionts</taxon>
        <taxon>Candidatus Blochmanniella</taxon>
    </lineage>
</organism>
<proteinExistence type="inferred from homology"/>
<feature type="chain" id="PRO_0000172323" description="Large ribosomal subunit protein bL32">
    <location>
        <begin position="1"/>
        <end position="56"/>
    </location>
</feature>
<feature type="region of interest" description="Disordered" evidence="2">
    <location>
        <begin position="1"/>
        <end position="23"/>
    </location>
</feature>
<feature type="compositionally biased region" description="Basic residues" evidence="2">
    <location>
        <begin position="9"/>
        <end position="19"/>
    </location>
</feature>
<sequence>MAVQQNKSTRSKRGMRRSHNALPITQISVDKVSKEIHRRHYITMNGFYRGVKMIEK</sequence>